<proteinExistence type="inferred from homology"/>
<evidence type="ECO:0000255" key="1">
    <source>
        <dbReference type="HAMAP-Rule" id="MF_00197"/>
    </source>
</evidence>
<organism>
    <name type="scientific">Escherichia coli O7:K1 (strain IAI39 / ExPEC)</name>
    <dbReference type="NCBI Taxonomy" id="585057"/>
    <lineage>
        <taxon>Bacteria</taxon>
        <taxon>Pseudomonadati</taxon>
        <taxon>Pseudomonadota</taxon>
        <taxon>Gammaproteobacteria</taxon>
        <taxon>Enterobacterales</taxon>
        <taxon>Enterobacteriaceae</taxon>
        <taxon>Escherichia</taxon>
    </lineage>
</organism>
<protein>
    <recommendedName>
        <fullName evidence="1">Diaminopimelate epimerase</fullName>
        <shortName evidence="1">DAP epimerase</shortName>
        <ecNumber evidence="1">5.1.1.7</ecNumber>
    </recommendedName>
    <alternativeName>
        <fullName evidence="1">PLP-independent amino acid racemase</fullName>
    </alternativeName>
</protein>
<sequence length="274" mass="30209">MQFSKMHGLGNDFMVVDAVTQNVFFSPELIRRLADRHLGVGFDQLLVVEPPYDPELDFHYRIFNADGSEVAQCGNGARCFARFVRLKGLTNKRDIRVSTANGRMVLTVTDDDLVRVNMGEPNFEPSAVPFRANKAEKTYIMRAAEQTILCGVVSMGNPHCVIQVDDVDTAAVETLGPVLESHERFPERANIGFMQVVKREHIRLRVYERGAGETQACGSGACAAVAVGIQQGLLAEEVRVELPGGRLDIAWKGPGHPLYMTGPAVHVYDGFIHL</sequence>
<accession>B7NTD3</accession>
<comment type="function">
    <text evidence="1">Catalyzes the stereoinversion of LL-2,6-diaminopimelate (L,L-DAP) to meso-diaminopimelate (meso-DAP), a precursor of L-lysine and an essential component of the bacterial peptidoglycan.</text>
</comment>
<comment type="catalytic activity">
    <reaction evidence="1">
        <text>(2S,6S)-2,6-diaminopimelate = meso-2,6-diaminopimelate</text>
        <dbReference type="Rhea" id="RHEA:15393"/>
        <dbReference type="ChEBI" id="CHEBI:57609"/>
        <dbReference type="ChEBI" id="CHEBI:57791"/>
        <dbReference type="EC" id="5.1.1.7"/>
    </reaction>
</comment>
<comment type="pathway">
    <text evidence="1">Amino-acid biosynthesis; L-lysine biosynthesis via DAP pathway; DL-2,6-diaminopimelate from LL-2,6-diaminopimelate: step 1/1.</text>
</comment>
<comment type="subunit">
    <text evidence="1">Homodimer.</text>
</comment>
<comment type="subcellular location">
    <subcellularLocation>
        <location evidence="1">Cytoplasm</location>
    </subcellularLocation>
</comment>
<comment type="similarity">
    <text evidence="1">Belongs to the diaminopimelate epimerase family.</text>
</comment>
<keyword id="KW-0028">Amino-acid biosynthesis</keyword>
<keyword id="KW-0963">Cytoplasm</keyword>
<keyword id="KW-0413">Isomerase</keyword>
<keyword id="KW-0457">Lysine biosynthesis</keyword>
<feature type="chain" id="PRO_1000118668" description="Diaminopimelate epimerase">
    <location>
        <begin position="1"/>
        <end position="274"/>
    </location>
</feature>
<feature type="active site" description="Proton donor" evidence="1">
    <location>
        <position position="73"/>
    </location>
</feature>
<feature type="active site" description="Proton acceptor" evidence="1">
    <location>
        <position position="217"/>
    </location>
</feature>
<feature type="binding site" evidence="1">
    <location>
        <position position="11"/>
    </location>
    <ligand>
        <name>substrate</name>
    </ligand>
</feature>
<feature type="binding site" evidence="1">
    <location>
        <position position="44"/>
    </location>
    <ligand>
        <name>substrate</name>
    </ligand>
</feature>
<feature type="binding site" evidence="1">
    <location>
        <position position="64"/>
    </location>
    <ligand>
        <name>substrate</name>
    </ligand>
</feature>
<feature type="binding site" evidence="1">
    <location>
        <begin position="74"/>
        <end position="75"/>
    </location>
    <ligand>
        <name>substrate</name>
    </ligand>
</feature>
<feature type="binding site" evidence="1">
    <location>
        <position position="157"/>
    </location>
    <ligand>
        <name>substrate</name>
    </ligand>
</feature>
<feature type="binding site" evidence="1">
    <location>
        <position position="190"/>
    </location>
    <ligand>
        <name>substrate</name>
    </ligand>
</feature>
<feature type="binding site" evidence="1">
    <location>
        <begin position="208"/>
        <end position="209"/>
    </location>
    <ligand>
        <name>substrate</name>
    </ligand>
</feature>
<feature type="binding site" evidence="1">
    <location>
        <begin position="218"/>
        <end position="219"/>
    </location>
    <ligand>
        <name>substrate</name>
    </ligand>
</feature>
<feature type="site" description="Could be important to modulate the pK values of the two catalytic cysteine residues" evidence="1">
    <location>
        <position position="159"/>
    </location>
</feature>
<feature type="site" description="Could be important to modulate the pK values of the two catalytic cysteine residues" evidence="1">
    <location>
        <position position="208"/>
    </location>
</feature>
<feature type="site" description="Important for dimerization" evidence="1">
    <location>
        <position position="268"/>
    </location>
</feature>
<reference key="1">
    <citation type="journal article" date="2009" name="PLoS Genet.">
        <title>Organised genome dynamics in the Escherichia coli species results in highly diverse adaptive paths.</title>
        <authorList>
            <person name="Touchon M."/>
            <person name="Hoede C."/>
            <person name="Tenaillon O."/>
            <person name="Barbe V."/>
            <person name="Baeriswyl S."/>
            <person name="Bidet P."/>
            <person name="Bingen E."/>
            <person name="Bonacorsi S."/>
            <person name="Bouchier C."/>
            <person name="Bouvet O."/>
            <person name="Calteau A."/>
            <person name="Chiapello H."/>
            <person name="Clermont O."/>
            <person name="Cruveiller S."/>
            <person name="Danchin A."/>
            <person name="Diard M."/>
            <person name="Dossat C."/>
            <person name="Karoui M.E."/>
            <person name="Frapy E."/>
            <person name="Garry L."/>
            <person name="Ghigo J.M."/>
            <person name="Gilles A.M."/>
            <person name="Johnson J."/>
            <person name="Le Bouguenec C."/>
            <person name="Lescat M."/>
            <person name="Mangenot S."/>
            <person name="Martinez-Jehanne V."/>
            <person name="Matic I."/>
            <person name="Nassif X."/>
            <person name="Oztas S."/>
            <person name="Petit M.A."/>
            <person name="Pichon C."/>
            <person name="Rouy Z."/>
            <person name="Ruf C.S."/>
            <person name="Schneider D."/>
            <person name="Tourret J."/>
            <person name="Vacherie B."/>
            <person name="Vallenet D."/>
            <person name="Medigue C."/>
            <person name="Rocha E.P.C."/>
            <person name="Denamur E."/>
        </authorList>
    </citation>
    <scope>NUCLEOTIDE SEQUENCE [LARGE SCALE GENOMIC DNA]</scope>
    <source>
        <strain>IAI39 / ExPEC</strain>
    </source>
</reference>
<dbReference type="EC" id="5.1.1.7" evidence="1"/>
<dbReference type="EMBL" id="CU928164">
    <property type="protein sequence ID" value="CAR19097.1"/>
    <property type="molecule type" value="Genomic_DNA"/>
</dbReference>
<dbReference type="RefSeq" id="WP_001160654.1">
    <property type="nucleotide sequence ID" value="NC_011750.1"/>
</dbReference>
<dbReference type="RefSeq" id="YP_002408906.1">
    <property type="nucleotide sequence ID" value="NC_011750.1"/>
</dbReference>
<dbReference type="SMR" id="B7NTD3"/>
<dbReference type="STRING" id="585057.ECIAI39_2978"/>
<dbReference type="GeneID" id="93778134"/>
<dbReference type="KEGG" id="ect:ECIAI39_2978"/>
<dbReference type="PATRIC" id="fig|585057.6.peg.3089"/>
<dbReference type="HOGENOM" id="CLU_053306_1_1_6"/>
<dbReference type="UniPathway" id="UPA00034">
    <property type="reaction ID" value="UER00025"/>
</dbReference>
<dbReference type="Proteomes" id="UP000000749">
    <property type="component" value="Chromosome"/>
</dbReference>
<dbReference type="GO" id="GO:0005829">
    <property type="term" value="C:cytosol"/>
    <property type="evidence" value="ECO:0007669"/>
    <property type="project" value="TreeGrafter"/>
</dbReference>
<dbReference type="GO" id="GO:0008837">
    <property type="term" value="F:diaminopimelate epimerase activity"/>
    <property type="evidence" value="ECO:0007669"/>
    <property type="project" value="UniProtKB-UniRule"/>
</dbReference>
<dbReference type="GO" id="GO:0009089">
    <property type="term" value="P:lysine biosynthetic process via diaminopimelate"/>
    <property type="evidence" value="ECO:0007669"/>
    <property type="project" value="UniProtKB-UniRule"/>
</dbReference>
<dbReference type="FunFam" id="3.10.310.10:FF:000001">
    <property type="entry name" value="Diaminopimelate epimerase"/>
    <property type="match status" value="1"/>
</dbReference>
<dbReference type="FunFam" id="3.10.310.10:FF:000002">
    <property type="entry name" value="Diaminopimelate epimerase"/>
    <property type="match status" value="1"/>
</dbReference>
<dbReference type="Gene3D" id="3.10.310.10">
    <property type="entry name" value="Diaminopimelate Epimerase, Chain A, domain 1"/>
    <property type="match status" value="2"/>
</dbReference>
<dbReference type="HAMAP" id="MF_00197">
    <property type="entry name" value="DAP_epimerase"/>
    <property type="match status" value="1"/>
</dbReference>
<dbReference type="InterPro" id="IPR018510">
    <property type="entry name" value="DAP_epimerase_AS"/>
</dbReference>
<dbReference type="InterPro" id="IPR001653">
    <property type="entry name" value="DAP_epimerase_DapF"/>
</dbReference>
<dbReference type="NCBIfam" id="TIGR00652">
    <property type="entry name" value="DapF"/>
    <property type="match status" value="1"/>
</dbReference>
<dbReference type="PANTHER" id="PTHR31689:SF0">
    <property type="entry name" value="DIAMINOPIMELATE EPIMERASE"/>
    <property type="match status" value="1"/>
</dbReference>
<dbReference type="PANTHER" id="PTHR31689">
    <property type="entry name" value="DIAMINOPIMELATE EPIMERASE, CHLOROPLASTIC"/>
    <property type="match status" value="1"/>
</dbReference>
<dbReference type="Pfam" id="PF01678">
    <property type="entry name" value="DAP_epimerase"/>
    <property type="match status" value="2"/>
</dbReference>
<dbReference type="SUPFAM" id="SSF54506">
    <property type="entry name" value="Diaminopimelate epimerase-like"/>
    <property type="match status" value="1"/>
</dbReference>
<dbReference type="PROSITE" id="PS01326">
    <property type="entry name" value="DAP_EPIMERASE"/>
    <property type="match status" value="1"/>
</dbReference>
<gene>
    <name evidence="1" type="primary">dapF</name>
    <name type="ordered locus">ECIAI39_2978</name>
</gene>
<name>DAPF_ECO7I</name>